<sequence length="393" mass="43975">MASLLARMGNSRRQNAAFMPFAHSMLRALGRSLGPLIANIAERNIQSFSGRAELGPGEETFENWLSQVHEVLPDWPMSEEEKIKRLMRTLRGPAREAMRLFQADNPNLNVAEFLRAMKLLFGASESSITAHGKFLSTLQAQGEKPSLYVIRLEVQLQNAIQAGVLPQSEANRTRLHQLLVGAELSRELRTKLKGLLQMHAHNEQENLPDFLELIRMIREEEDWDETFLRNKRPRRSETVMERAASPVVFQGSLPIVIGSADCNVIEIDDSQDDSDEDVILVEPEDPPLSSPGASSLRGTASTQEEMLIIESPDDFDEESPSTSSGSGQRNNGPGDLGRTRKRKYPIRCPHCGEEGHAKETCDNTSNKGQVFENLIVTLQELTHMERPKPSVPY</sequence>
<comment type="similarity">
    <text evidence="2">Belongs to the ZCCHC12 family.</text>
</comment>
<dbReference type="EMBL" id="AY650116">
    <property type="protein sequence ID" value="AAT67149.1"/>
    <property type="molecule type" value="mRNA"/>
</dbReference>
<dbReference type="EMBL" id="AK005317">
    <property type="protein sequence ID" value="BAB23950.1"/>
    <property type="molecule type" value="mRNA"/>
</dbReference>
<dbReference type="EMBL" id="AK075607">
    <property type="protein sequence ID" value="BAC35854.1"/>
    <property type="molecule type" value="mRNA"/>
</dbReference>
<dbReference type="EMBL" id="AK134856">
    <property type="protein sequence ID" value="BAE22314.1"/>
    <property type="molecule type" value="mRNA"/>
</dbReference>
<dbReference type="EMBL" id="AL672008">
    <property type="status" value="NOT_ANNOTATED_CDS"/>
    <property type="molecule type" value="Genomic_DNA"/>
</dbReference>
<dbReference type="EMBL" id="CH466616">
    <property type="protein sequence ID" value="EDL23889.1"/>
    <property type="molecule type" value="Genomic_DNA"/>
</dbReference>
<dbReference type="EMBL" id="CH466616">
    <property type="protein sequence ID" value="EDL23890.1"/>
    <property type="molecule type" value="Genomic_DNA"/>
</dbReference>
<dbReference type="EMBL" id="BC017627">
    <property type="protein sequence ID" value="AAH17627.1"/>
    <property type="molecule type" value="mRNA"/>
</dbReference>
<dbReference type="CCDS" id="CCDS30427.1"/>
<dbReference type="RefSeq" id="NP_001030586.1">
    <property type="nucleotide sequence ID" value="NM_001035509.2"/>
</dbReference>
<dbReference type="RefSeq" id="NP_001030587.1">
    <property type="nucleotide sequence ID" value="NM_001035510.2"/>
</dbReference>
<dbReference type="RefSeq" id="NP_001345366.1">
    <property type="nucleotide sequence ID" value="NM_001358437.1"/>
</dbReference>
<dbReference type="RefSeq" id="NP_001345368.1">
    <property type="nucleotide sequence ID" value="NM_001358439.1"/>
</dbReference>
<dbReference type="RefSeq" id="NP_001345369.1">
    <property type="nucleotide sequence ID" value="NM_001358440.1"/>
</dbReference>
<dbReference type="RefSeq" id="NP_001345370.1">
    <property type="nucleotide sequence ID" value="NM_001358441.1"/>
</dbReference>
<dbReference type="RefSeq" id="NP_080169.2">
    <property type="nucleotide sequence ID" value="NM_025893.3"/>
</dbReference>
<dbReference type="RefSeq" id="XP_006528657.1">
    <property type="nucleotide sequence ID" value="XM_006528594.1"/>
</dbReference>
<dbReference type="RefSeq" id="XP_011246059.1">
    <property type="nucleotide sequence ID" value="XM_011247757.2"/>
</dbReference>
<dbReference type="RefSeq" id="XP_017174097.1">
    <property type="nucleotide sequence ID" value="XM_017318608.1"/>
</dbReference>
<dbReference type="RefSeq" id="XP_017174098.1">
    <property type="nucleotide sequence ID" value="XM_017318609.1"/>
</dbReference>
<dbReference type="RefSeq" id="XP_030107344.1">
    <property type="nucleotide sequence ID" value="XM_030251484.2"/>
</dbReference>
<dbReference type="RefSeq" id="XP_030107345.1">
    <property type="nucleotide sequence ID" value="XM_030251485.2"/>
</dbReference>
<dbReference type="SMR" id="Q8VD24"/>
<dbReference type="BioGRID" id="211862">
    <property type="interactions" value="1"/>
</dbReference>
<dbReference type="FunCoup" id="Q8VD24">
    <property type="interactions" value="24"/>
</dbReference>
<dbReference type="STRING" id="10090.ENSMUSP00000033804"/>
<dbReference type="iPTMnet" id="Q8VD24"/>
<dbReference type="PhosphoSitePlus" id="Q8VD24"/>
<dbReference type="PaxDb" id="10090-ENSMUSP00000033804"/>
<dbReference type="ProteomicsDB" id="275271"/>
<dbReference type="Ensembl" id="ENSMUST00000033804.5">
    <property type="protein sequence ID" value="ENSMUSP00000033804.5"/>
    <property type="gene ID" value="ENSMUSG00000031428.12"/>
</dbReference>
<dbReference type="Ensembl" id="ENSMUST00000101227.3">
    <property type="protein sequence ID" value="ENSMUSP00000098788.3"/>
    <property type="gene ID" value="ENSMUSG00000031428.12"/>
</dbReference>
<dbReference type="Ensembl" id="ENSMUST00000113067.8">
    <property type="protein sequence ID" value="ENSMUSP00000108690.2"/>
    <property type="gene ID" value="ENSMUSG00000031428.12"/>
</dbReference>
<dbReference type="GeneID" id="66995"/>
<dbReference type="KEGG" id="mmu:66995"/>
<dbReference type="UCSC" id="uc009ujk.1">
    <property type="organism name" value="mouse"/>
</dbReference>
<dbReference type="AGR" id="MGI:1914245"/>
<dbReference type="CTD" id="644353"/>
<dbReference type="MGI" id="MGI:1914245">
    <property type="gene designation" value="Zcchc18"/>
</dbReference>
<dbReference type="VEuPathDB" id="HostDB:ENSMUSG00000031428"/>
<dbReference type="eggNOG" id="ENOG502RU0T">
    <property type="taxonomic scope" value="Eukaryota"/>
</dbReference>
<dbReference type="GeneTree" id="ENSGT01030000234522"/>
<dbReference type="HOGENOM" id="CLU_686127_0_0_1"/>
<dbReference type="InParanoid" id="Q8VD24"/>
<dbReference type="OMA" id="ETCNRES"/>
<dbReference type="OrthoDB" id="115435at2759"/>
<dbReference type="PhylomeDB" id="Q8VD24"/>
<dbReference type="TreeFam" id="TF335054"/>
<dbReference type="BioGRID-ORCS" id="66995">
    <property type="hits" value="4 hits in 78 CRISPR screens"/>
</dbReference>
<dbReference type="ChiTaRS" id="Zcchc18">
    <property type="organism name" value="mouse"/>
</dbReference>
<dbReference type="PRO" id="PR:Q8VD24"/>
<dbReference type="Proteomes" id="UP000000589">
    <property type="component" value="Chromosome X"/>
</dbReference>
<dbReference type="RNAct" id="Q8VD24">
    <property type="molecule type" value="protein"/>
</dbReference>
<dbReference type="Bgee" id="ENSMUSG00000031428">
    <property type="expression patterns" value="Expressed in ventromedial nucleus of hypothalamus and 198 other cell types or tissues"/>
</dbReference>
<dbReference type="GO" id="GO:0008270">
    <property type="term" value="F:zinc ion binding"/>
    <property type="evidence" value="ECO:0007669"/>
    <property type="project" value="UniProtKB-KW"/>
</dbReference>
<dbReference type="InterPro" id="IPR026523">
    <property type="entry name" value="PNMA"/>
</dbReference>
<dbReference type="InterPro" id="IPR048270">
    <property type="entry name" value="PNMA_C"/>
</dbReference>
<dbReference type="PANTHER" id="PTHR23095">
    <property type="entry name" value="PARANEOPLASTIC ANTIGEN"/>
    <property type="match status" value="1"/>
</dbReference>
<dbReference type="PANTHER" id="PTHR23095:SF52">
    <property type="entry name" value="ZINC FINGER CCHC DOMAIN-CONTAINING PROTEIN 18"/>
    <property type="match status" value="1"/>
</dbReference>
<dbReference type="Pfam" id="PF14893">
    <property type="entry name" value="PNMA"/>
    <property type="match status" value="1"/>
</dbReference>
<name>ZCC18_MOUSE</name>
<keyword id="KW-0479">Metal-binding</keyword>
<keyword id="KW-1185">Reference proteome</keyword>
<keyword id="KW-0862">Zinc</keyword>
<keyword id="KW-0863">Zinc-finger</keyword>
<gene>
    <name evidence="4" type="primary">Zcchc18</name>
    <name evidence="3" type="synonym">Sizn2</name>
</gene>
<proteinExistence type="evidence at transcript level"/>
<protein>
    <recommendedName>
        <fullName evidence="2">Zinc finger CCHC domain-containing protein 18</fullName>
    </recommendedName>
</protein>
<accession>Q8VD24</accession>
<accession>Q9DB17</accession>
<feature type="chain" id="PRO_0000395362" description="Zinc finger CCHC domain-containing protein 18">
    <location>
        <begin position="1"/>
        <end position="393"/>
    </location>
</feature>
<feature type="zinc finger region" description="CCHC-type">
    <location>
        <begin position="346"/>
        <end position="363"/>
    </location>
</feature>
<feature type="region of interest" description="Disordered" evidence="1">
    <location>
        <begin position="281"/>
        <end position="300"/>
    </location>
</feature>
<feature type="region of interest" description="Disordered" evidence="1">
    <location>
        <begin position="313"/>
        <end position="341"/>
    </location>
</feature>
<feature type="compositionally biased region" description="Polar residues" evidence="1">
    <location>
        <begin position="291"/>
        <end position="300"/>
    </location>
</feature>
<feature type="compositionally biased region" description="Polar residues" evidence="1">
    <location>
        <begin position="320"/>
        <end position="331"/>
    </location>
</feature>
<feature type="sequence conflict" description="In Ref. 2; BAB23950." evidence="2" ref="2">
    <original>I</original>
    <variation>M</variation>
    <location>
        <position position="255"/>
    </location>
</feature>
<reference key="1">
    <citation type="submission" date="2004-06" db="EMBL/GenBank/DDBJ databases">
        <title>Sizn2 expressed in developing mouse brain.</title>
        <authorList>
            <person name="Cho G."/>
            <person name="Lim Y."/>
            <person name="Golden J."/>
        </authorList>
    </citation>
    <scope>NUCLEOTIDE SEQUENCE [MRNA]</scope>
    <source>
        <strain>CD-1</strain>
        <tissue>Brain</tissue>
    </source>
</reference>
<reference key="2">
    <citation type="journal article" date="2005" name="Science">
        <title>The transcriptional landscape of the mammalian genome.</title>
        <authorList>
            <person name="Carninci P."/>
            <person name="Kasukawa T."/>
            <person name="Katayama S."/>
            <person name="Gough J."/>
            <person name="Frith M.C."/>
            <person name="Maeda N."/>
            <person name="Oyama R."/>
            <person name="Ravasi T."/>
            <person name="Lenhard B."/>
            <person name="Wells C."/>
            <person name="Kodzius R."/>
            <person name="Shimokawa K."/>
            <person name="Bajic V.B."/>
            <person name="Brenner S.E."/>
            <person name="Batalov S."/>
            <person name="Forrest A.R."/>
            <person name="Zavolan M."/>
            <person name="Davis M.J."/>
            <person name="Wilming L.G."/>
            <person name="Aidinis V."/>
            <person name="Allen J.E."/>
            <person name="Ambesi-Impiombato A."/>
            <person name="Apweiler R."/>
            <person name="Aturaliya R.N."/>
            <person name="Bailey T.L."/>
            <person name="Bansal M."/>
            <person name="Baxter L."/>
            <person name="Beisel K.W."/>
            <person name="Bersano T."/>
            <person name="Bono H."/>
            <person name="Chalk A.M."/>
            <person name="Chiu K.P."/>
            <person name="Choudhary V."/>
            <person name="Christoffels A."/>
            <person name="Clutterbuck D.R."/>
            <person name="Crowe M.L."/>
            <person name="Dalla E."/>
            <person name="Dalrymple B.P."/>
            <person name="de Bono B."/>
            <person name="Della Gatta G."/>
            <person name="di Bernardo D."/>
            <person name="Down T."/>
            <person name="Engstrom P."/>
            <person name="Fagiolini M."/>
            <person name="Faulkner G."/>
            <person name="Fletcher C.F."/>
            <person name="Fukushima T."/>
            <person name="Furuno M."/>
            <person name="Futaki S."/>
            <person name="Gariboldi M."/>
            <person name="Georgii-Hemming P."/>
            <person name="Gingeras T.R."/>
            <person name="Gojobori T."/>
            <person name="Green R.E."/>
            <person name="Gustincich S."/>
            <person name="Harbers M."/>
            <person name="Hayashi Y."/>
            <person name="Hensch T.K."/>
            <person name="Hirokawa N."/>
            <person name="Hill D."/>
            <person name="Huminiecki L."/>
            <person name="Iacono M."/>
            <person name="Ikeo K."/>
            <person name="Iwama A."/>
            <person name="Ishikawa T."/>
            <person name="Jakt M."/>
            <person name="Kanapin A."/>
            <person name="Katoh M."/>
            <person name="Kawasawa Y."/>
            <person name="Kelso J."/>
            <person name="Kitamura H."/>
            <person name="Kitano H."/>
            <person name="Kollias G."/>
            <person name="Krishnan S.P."/>
            <person name="Kruger A."/>
            <person name="Kummerfeld S.K."/>
            <person name="Kurochkin I.V."/>
            <person name="Lareau L.F."/>
            <person name="Lazarevic D."/>
            <person name="Lipovich L."/>
            <person name="Liu J."/>
            <person name="Liuni S."/>
            <person name="McWilliam S."/>
            <person name="Madan Babu M."/>
            <person name="Madera M."/>
            <person name="Marchionni L."/>
            <person name="Matsuda H."/>
            <person name="Matsuzawa S."/>
            <person name="Miki H."/>
            <person name="Mignone F."/>
            <person name="Miyake S."/>
            <person name="Morris K."/>
            <person name="Mottagui-Tabar S."/>
            <person name="Mulder N."/>
            <person name="Nakano N."/>
            <person name="Nakauchi H."/>
            <person name="Ng P."/>
            <person name="Nilsson R."/>
            <person name="Nishiguchi S."/>
            <person name="Nishikawa S."/>
            <person name="Nori F."/>
            <person name="Ohara O."/>
            <person name="Okazaki Y."/>
            <person name="Orlando V."/>
            <person name="Pang K.C."/>
            <person name="Pavan W.J."/>
            <person name="Pavesi G."/>
            <person name="Pesole G."/>
            <person name="Petrovsky N."/>
            <person name="Piazza S."/>
            <person name="Reed J."/>
            <person name="Reid J.F."/>
            <person name="Ring B.Z."/>
            <person name="Ringwald M."/>
            <person name="Rost B."/>
            <person name="Ruan Y."/>
            <person name="Salzberg S.L."/>
            <person name="Sandelin A."/>
            <person name="Schneider C."/>
            <person name="Schoenbach C."/>
            <person name="Sekiguchi K."/>
            <person name="Semple C.A."/>
            <person name="Seno S."/>
            <person name="Sessa L."/>
            <person name="Sheng Y."/>
            <person name="Shibata Y."/>
            <person name="Shimada H."/>
            <person name="Shimada K."/>
            <person name="Silva D."/>
            <person name="Sinclair B."/>
            <person name="Sperling S."/>
            <person name="Stupka E."/>
            <person name="Sugiura K."/>
            <person name="Sultana R."/>
            <person name="Takenaka Y."/>
            <person name="Taki K."/>
            <person name="Tammoja K."/>
            <person name="Tan S.L."/>
            <person name="Tang S."/>
            <person name="Taylor M.S."/>
            <person name="Tegner J."/>
            <person name="Teichmann S.A."/>
            <person name="Ueda H.R."/>
            <person name="van Nimwegen E."/>
            <person name="Verardo R."/>
            <person name="Wei C.L."/>
            <person name="Yagi K."/>
            <person name="Yamanishi H."/>
            <person name="Zabarovsky E."/>
            <person name="Zhu S."/>
            <person name="Zimmer A."/>
            <person name="Hide W."/>
            <person name="Bult C."/>
            <person name="Grimmond S.M."/>
            <person name="Teasdale R.D."/>
            <person name="Liu E.T."/>
            <person name="Brusic V."/>
            <person name="Quackenbush J."/>
            <person name="Wahlestedt C."/>
            <person name="Mattick J.S."/>
            <person name="Hume D.A."/>
            <person name="Kai C."/>
            <person name="Sasaki D."/>
            <person name="Tomaru Y."/>
            <person name="Fukuda S."/>
            <person name="Kanamori-Katayama M."/>
            <person name="Suzuki M."/>
            <person name="Aoki J."/>
            <person name="Arakawa T."/>
            <person name="Iida J."/>
            <person name="Imamura K."/>
            <person name="Itoh M."/>
            <person name="Kato T."/>
            <person name="Kawaji H."/>
            <person name="Kawagashira N."/>
            <person name="Kawashima T."/>
            <person name="Kojima M."/>
            <person name="Kondo S."/>
            <person name="Konno H."/>
            <person name="Nakano K."/>
            <person name="Ninomiya N."/>
            <person name="Nishio T."/>
            <person name="Okada M."/>
            <person name="Plessy C."/>
            <person name="Shibata K."/>
            <person name="Shiraki T."/>
            <person name="Suzuki S."/>
            <person name="Tagami M."/>
            <person name="Waki K."/>
            <person name="Watahiki A."/>
            <person name="Okamura-Oho Y."/>
            <person name="Suzuki H."/>
            <person name="Kawai J."/>
            <person name="Hayashizaki Y."/>
        </authorList>
    </citation>
    <scope>NUCLEOTIDE SEQUENCE [LARGE SCALE MRNA]</scope>
    <source>
        <strain>C57BL/6J</strain>
        <tissue>Brain</tissue>
        <tissue>Cerebellum</tissue>
        <tissue>Olfactory bulb</tissue>
    </source>
</reference>
<reference key="3">
    <citation type="journal article" date="2009" name="PLoS Biol.">
        <title>Lineage-specific biology revealed by a finished genome assembly of the mouse.</title>
        <authorList>
            <person name="Church D.M."/>
            <person name="Goodstadt L."/>
            <person name="Hillier L.W."/>
            <person name="Zody M.C."/>
            <person name="Goldstein S."/>
            <person name="She X."/>
            <person name="Bult C.J."/>
            <person name="Agarwala R."/>
            <person name="Cherry J.L."/>
            <person name="DiCuccio M."/>
            <person name="Hlavina W."/>
            <person name="Kapustin Y."/>
            <person name="Meric P."/>
            <person name="Maglott D."/>
            <person name="Birtle Z."/>
            <person name="Marques A.C."/>
            <person name="Graves T."/>
            <person name="Zhou S."/>
            <person name="Teague B."/>
            <person name="Potamousis K."/>
            <person name="Churas C."/>
            <person name="Place M."/>
            <person name="Herschleb J."/>
            <person name="Runnheim R."/>
            <person name="Forrest D."/>
            <person name="Amos-Landgraf J."/>
            <person name="Schwartz D.C."/>
            <person name="Cheng Z."/>
            <person name="Lindblad-Toh K."/>
            <person name="Eichler E.E."/>
            <person name="Ponting C.P."/>
        </authorList>
    </citation>
    <scope>NUCLEOTIDE SEQUENCE [LARGE SCALE GENOMIC DNA]</scope>
    <source>
        <strain>C57BL/6J</strain>
    </source>
</reference>
<reference key="4">
    <citation type="submission" date="2005-07" db="EMBL/GenBank/DDBJ databases">
        <authorList>
            <person name="Mural R.J."/>
            <person name="Adams M.D."/>
            <person name="Myers E.W."/>
            <person name="Smith H.O."/>
            <person name="Venter J.C."/>
        </authorList>
    </citation>
    <scope>NUCLEOTIDE SEQUENCE [LARGE SCALE GENOMIC DNA]</scope>
</reference>
<reference key="5">
    <citation type="journal article" date="2004" name="Genome Res.">
        <title>The status, quality, and expansion of the NIH full-length cDNA project: the Mammalian Gene Collection (MGC).</title>
        <authorList>
            <consortium name="The MGC Project Team"/>
        </authorList>
    </citation>
    <scope>NUCLEOTIDE SEQUENCE [LARGE SCALE MRNA]</scope>
    <source>
        <tissue>Eye</tissue>
    </source>
</reference>
<evidence type="ECO:0000256" key="1">
    <source>
        <dbReference type="SAM" id="MobiDB-lite"/>
    </source>
</evidence>
<evidence type="ECO:0000305" key="2"/>
<evidence type="ECO:0000312" key="3">
    <source>
        <dbReference type="EMBL" id="AAT67149.1"/>
    </source>
</evidence>
<evidence type="ECO:0000312" key="4">
    <source>
        <dbReference type="MGI" id="MGI:1914245"/>
    </source>
</evidence>
<organism>
    <name type="scientific">Mus musculus</name>
    <name type="common">Mouse</name>
    <dbReference type="NCBI Taxonomy" id="10090"/>
    <lineage>
        <taxon>Eukaryota</taxon>
        <taxon>Metazoa</taxon>
        <taxon>Chordata</taxon>
        <taxon>Craniata</taxon>
        <taxon>Vertebrata</taxon>
        <taxon>Euteleostomi</taxon>
        <taxon>Mammalia</taxon>
        <taxon>Eutheria</taxon>
        <taxon>Euarchontoglires</taxon>
        <taxon>Glires</taxon>
        <taxon>Rodentia</taxon>
        <taxon>Myomorpha</taxon>
        <taxon>Muroidea</taxon>
        <taxon>Muridae</taxon>
        <taxon>Murinae</taxon>
        <taxon>Mus</taxon>
        <taxon>Mus</taxon>
    </lineage>
</organism>